<protein>
    <recommendedName>
        <fullName evidence="1">Ornithine aminotransferase</fullName>
        <shortName evidence="1">OAT</shortName>
        <ecNumber evidence="1">2.6.1.13</ecNumber>
    </recommendedName>
    <alternativeName>
        <fullName evidence="1">Ornithine--oxo-acid aminotransferase</fullName>
    </alternativeName>
</protein>
<keyword id="KW-0028">Amino-acid biosynthesis</keyword>
<keyword id="KW-0032">Aminotransferase</keyword>
<keyword id="KW-0963">Cytoplasm</keyword>
<keyword id="KW-0641">Proline biosynthesis</keyword>
<keyword id="KW-0663">Pyridoxal phosphate</keyword>
<keyword id="KW-0808">Transferase</keyword>
<feature type="chain" id="PRO_0000120504" description="Ornithine aminotransferase">
    <location>
        <begin position="1"/>
        <end position="411"/>
    </location>
</feature>
<feature type="modified residue" description="N6-(pyridoxal phosphate)lysine" evidence="1">
    <location>
        <position position="257"/>
    </location>
</feature>
<proteinExistence type="inferred from homology"/>
<evidence type="ECO:0000255" key="1">
    <source>
        <dbReference type="HAMAP-Rule" id="MF_01689"/>
    </source>
</evidence>
<evidence type="ECO:0000305" key="2"/>
<organism>
    <name type="scientific">Bordetella bronchiseptica (strain ATCC BAA-588 / NCTC 13252 / RB50)</name>
    <name type="common">Alcaligenes bronchisepticus</name>
    <dbReference type="NCBI Taxonomy" id="257310"/>
    <lineage>
        <taxon>Bacteria</taxon>
        <taxon>Pseudomonadati</taxon>
        <taxon>Pseudomonadota</taxon>
        <taxon>Betaproteobacteria</taxon>
        <taxon>Burkholderiales</taxon>
        <taxon>Alcaligenaceae</taxon>
        <taxon>Bordetella</taxon>
    </lineage>
</organism>
<dbReference type="EC" id="2.6.1.13" evidence="1"/>
<dbReference type="EMBL" id="BX640439">
    <property type="protein sequence ID" value="CAE31333.1"/>
    <property type="status" value="ALT_INIT"/>
    <property type="molecule type" value="Genomic_DNA"/>
</dbReference>
<dbReference type="SMR" id="Q7WP51"/>
<dbReference type="KEGG" id="bbr:BB0834"/>
<dbReference type="eggNOG" id="COG4992">
    <property type="taxonomic scope" value="Bacteria"/>
</dbReference>
<dbReference type="HOGENOM" id="CLU_016922_10_3_4"/>
<dbReference type="UniPathway" id="UPA00098">
    <property type="reaction ID" value="UER00358"/>
</dbReference>
<dbReference type="Proteomes" id="UP000001027">
    <property type="component" value="Chromosome"/>
</dbReference>
<dbReference type="GO" id="GO:0005737">
    <property type="term" value="C:cytoplasm"/>
    <property type="evidence" value="ECO:0007669"/>
    <property type="project" value="UniProtKB-SubCell"/>
</dbReference>
<dbReference type="GO" id="GO:0042802">
    <property type="term" value="F:identical protein binding"/>
    <property type="evidence" value="ECO:0007669"/>
    <property type="project" value="TreeGrafter"/>
</dbReference>
<dbReference type="GO" id="GO:0004587">
    <property type="term" value="F:ornithine aminotransferase activity"/>
    <property type="evidence" value="ECO:0007669"/>
    <property type="project" value="UniProtKB-UniRule"/>
</dbReference>
<dbReference type="GO" id="GO:0030170">
    <property type="term" value="F:pyridoxal phosphate binding"/>
    <property type="evidence" value="ECO:0007669"/>
    <property type="project" value="UniProtKB-UniRule"/>
</dbReference>
<dbReference type="GO" id="GO:0055129">
    <property type="term" value="P:L-proline biosynthetic process"/>
    <property type="evidence" value="ECO:0007669"/>
    <property type="project" value="UniProtKB-UniRule"/>
</dbReference>
<dbReference type="CDD" id="cd00610">
    <property type="entry name" value="OAT_like"/>
    <property type="match status" value="1"/>
</dbReference>
<dbReference type="FunFam" id="3.40.640.10:FF:000011">
    <property type="entry name" value="Ornithine aminotransferase"/>
    <property type="match status" value="1"/>
</dbReference>
<dbReference type="Gene3D" id="3.90.1150.10">
    <property type="entry name" value="Aspartate Aminotransferase, domain 1"/>
    <property type="match status" value="1"/>
</dbReference>
<dbReference type="Gene3D" id="3.40.640.10">
    <property type="entry name" value="Type I PLP-dependent aspartate aminotransferase-like (Major domain)"/>
    <property type="match status" value="1"/>
</dbReference>
<dbReference type="HAMAP" id="MF_01689">
    <property type="entry name" value="Ornith_aminotrans_3"/>
    <property type="match status" value="1"/>
</dbReference>
<dbReference type="InterPro" id="IPR005814">
    <property type="entry name" value="Aminotrans_3"/>
</dbReference>
<dbReference type="InterPro" id="IPR049704">
    <property type="entry name" value="Aminotrans_3_PPA_site"/>
</dbReference>
<dbReference type="InterPro" id="IPR050103">
    <property type="entry name" value="Class-III_PLP-dep_AT"/>
</dbReference>
<dbReference type="InterPro" id="IPR010164">
    <property type="entry name" value="Orn_aminotrans"/>
</dbReference>
<dbReference type="InterPro" id="IPR034757">
    <property type="entry name" value="Ornith_aminotrans_bact"/>
</dbReference>
<dbReference type="InterPro" id="IPR015424">
    <property type="entry name" value="PyrdxlP-dep_Trfase"/>
</dbReference>
<dbReference type="InterPro" id="IPR015421">
    <property type="entry name" value="PyrdxlP-dep_Trfase_major"/>
</dbReference>
<dbReference type="InterPro" id="IPR015422">
    <property type="entry name" value="PyrdxlP-dep_Trfase_small"/>
</dbReference>
<dbReference type="NCBIfam" id="TIGR01885">
    <property type="entry name" value="Orn_aminotrans"/>
    <property type="match status" value="1"/>
</dbReference>
<dbReference type="PANTHER" id="PTHR11986">
    <property type="entry name" value="AMINOTRANSFERASE CLASS III"/>
    <property type="match status" value="1"/>
</dbReference>
<dbReference type="PANTHER" id="PTHR11986:SF18">
    <property type="entry name" value="ORNITHINE AMINOTRANSFERASE, MITOCHONDRIAL"/>
    <property type="match status" value="1"/>
</dbReference>
<dbReference type="Pfam" id="PF00202">
    <property type="entry name" value="Aminotran_3"/>
    <property type="match status" value="1"/>
</dbReference>
<dbReference type="PIRSF" id="PIRSF000521">
    <property type="entry name" value="Transaminase_4ab_Lys_Orn"/>
    <property type="match status" value="1"/>
</dbReference>
<dbReference type="SUPFAM" id="SSF53383">
    <property type="entry name" value="PLP-dependent transferases"/>
    <property type="match status" value="1"/>
</dbReference>
<dbReference type="PROSITE" id="PS00600">
    <property type="entry name" value="AA_TRANSFER_CLASS_3"/>
    <property type="match status" value="1"/>
</dbReference>
<reference key="1">
    <citation type="journal article" date="2003" name="Nat. Genet.">
        <title>Comparative analysis of the genome sequences of Bordetella pertussis, Bordetella parapertussis and Bordetella bronchiseptica.</title>
        <authorList>
            <person name="Parkhill J."/>
            <person name="Sebaihia M."/>
            <person name="Preston A."/>
            <person name="Murphy L.D."/>
            <person name="Thomson N.R."/>
            <person name="Harris D.E."/>
            <person name="Holden M.T.G."/>
            <person name="Churcher C.M."/>
            <person name="Bentley S.D."/>
            <person name="Mungall K.L."/>
            <person name="Cerdeno-Tarraga A.-M."/>
            <person name="Temple L."/>
            <person name="James K.D."/>
            <person name="Harris B."/>
            <person name="Quail M.A."/>
            <person name="Achtman M."/>
            <person name="Atkin R."/>
            <person name="Baker S."/>
            <person name="Basham D."/>
            <person name="Bason N."/>
            <person name="Cherevach I."/>
            <person name="Chillingworth T."/>
            <person name="Collins M."/>
            <person name="Cronin A."/>
            <person name="Davis P."/>
            <person name="Doggett J."/>
            <person name="Feltwell T."/>
            <person name="Goble A."/>
            <person name="Hamlin N."/>
            <person name="Hauser H."/>
            <person name="Holroyd S."/>
            <person name="Jagels K."/>
            <person name="Leather S."/>
            <person name="Moule S."/>
            <person name="Norberczak H."/>
            <person name="O'Neil S."/>
            <person name="Ormond D."/>
            <person name="Price C."/>
            <person name="Rabbinowitsch E."/>
            <person name="Rutter S."/>
            <person name="Sanders M."/>
            <person name="Saunders D."/>
            <person name="Seeger K."/>
            <person name="Sharp S."/>
            <person name="Simmonds M."/>
            <person name="Skelton J."/>
            <person name="Squares R."/>
            <person name="Squares S."/>
            <person name="Stevens K."/>
            <person name="Unwin L."/>
            <person name="Whitehead S."/>
            <person name="Barrell B.G."/>
            <person name="Maskell D.J."/>
        </authorList>
    </citation>
    <scope>NUCLEOTIDE SEQUENCE [LARGE SCALE GENOMIC DNA]</scope>
    <source>
        <strain>ATCC BAA-588 / NCTC 13252 / RB50</strain>
    </source>
</reference>
<comment type="function">
    <text evidence="1">Catalyzes the interconversion of ornithine to glutamate semialdehyde.</text>
</comment>
<comment type="catalytic activity">
    <reaction evidence="1">
        <text>a 2-oxocarboxylate + L-ornithine = L-glutamate 5-semialdehyde + an L-alpha-amino acid</text>
        <dbReference type="Rhea" id="RHEA:13877"/>
        <dbReference type="ChEBI" id="CHEBI:35179"/>
        <dbReference type="ChEBI" id="CHEBI:46911"/>
        <dbReference type="ChEBI" id="CHEBI:58066"/>
        <dbReference type="ChEBI" id="CHEBI:59869"/>
        <dbReference type="EC" id="2.6.1.13"/>
    </reaction>
</comment>
<comment type="cofactor">
    <cofactor evidence="1">
        <name>pyridoxal 5'-phosphate</name>
        <dbReference type="ChEBI" id="CHEBI:597326"/>
    </cofactor>
</comment>
<comment type="pathway">
    <text evidence="1">Amino-acid biosynthesis; L-proline biosynthesis; L-glutamate 5-semialdehyde from L-ornithine: step 1/1.</text>
</comment>
<comment type="subcellular location">
    <subcellularLocation>
        <location evidence="1">Cytoplasm</location>
    </subcellularLocation>
</comment>
<comment type="similarity">
    <text evidence="1">Belongs to the class-III pyridoxal-phosphate-dependent aminotransferase family. OAT subfamily.</text>
</comment>
<comment type="sequence caution" evidence="2">
    <conflict type="erroneous initiation">
        <sequence resource="EMBL-CDS" id="CAE31333"/>
    </conflict>
</comment>
<sequence>MPAPAATRRDRIEDELGAHNYQPLDVVLARGSGVWLYDTAGRRYLDCLSAYSAVNQGHCHPRILAAMVEQAQRLTLTSRAFRHDQLAPLYEDLARLTGAHKVLPMNSGAEAVETALKAVRKWGYEARGVPAGQAEIIVCANNFHGRTLGIVGFSTDPDARGGYGPFAPGFTVVPFGDFAALQAAVTPRTVAFLVEPIQGEAGVILPPPGYFRQVRKLCSERDIVLILDEIQTGLGRTGAFLAEAHEGIEADVTLIGKALSGGFYPVSAVLSNQAVLGIFQPGQHGSTFGGNPLACAVARAALRVLHDEGMIDNAREQGAYFMQRLRALPGPVREVRGRGLMLALELEPDAGPARAYCERLMARGMLVKDTHGQTLRLSPPLIVTREQIDWACAQLAHVLAHSAPGSSGGPS</sequence>
<name>OAT_BORBR</name>
<gene>
    <name evidence="1" type="primary">rocD</name>
    <name type="ordered locus">BB0834</name>
</gene>
<accession>Q7WP51</accession>